<proteinExistence type="inferred from homology"/>
<evidence type="ECO:0000255" key="1">
    <source>
        <dbReference type="HAMAP-Rule" id="MF_01208"/>
    </source>
</evidence>
<organism>
    <name type="scientific">Enterobacter sp. (strain 638)</name>
    <dbReference type="NCBI Taxonomy" id="399742"/>
    <lineage>
        <taxon>Bacteria</taxon>
        <taxon>Pseudomonadati</taxon>
        <taxon>Pseudomonadota</taxon>
        <taxon>Gammaproteobacteria</taxon>
        <taxon>Enterobacterales</taxon>
        <taxon>Enterobacteriaceae</taxon>
        <taxon>Enterobacter</taxon>
    </lineage>
</organism>
<comment type="function">
    <text evidence="1">Catalyzes the transfer of a ribosyl phosphate group from 5-phosphoribose 1-diphosphate to orotate, leading to the formation of orotidine monophosphate (OMP).</text>
</comment>
<comment type="catalytic activity">
    <reaction evidence="1">
        <text>orotidine 5'-phosphate + diphosphate = orotate + 5-phospho-alpha-D-ribose 1-diphosphate</text>
        <dbReference type="Rhea" id="RHEA:10380"/>
        <dbReference type="ChEBI" id="CHEBI:30839"/>
        <dbReference type="ChEBI" id="CHEBI:33019"/>
        <dbReference type="ChEBI" id="CHEBI:57538"/>
        <dbReference type="ChEBI" id="CHEBI:58017"/>
        <dbReference type="EC" id="2.4.2.10"/>
    </reaction>
</comment>
<comment type="cofactor">
    <cofactor evidence="1">
        <name>Mg(2+)</name>
        <dbReference type="ChEBI" id="CHEBI:18420"/>
    </cofactor>
</comment>
<comment type="pathway">
    <text evidence="1">Pyrimidine metabolism; UMP biosynthesis via de novo pathway; UMP from orotate: step 1/2.</text>
</comment>
<comment type="subunit">
    <text evidence="1">Homodimer.</text>
</comment>
<comment type="similarity">
    <text evidence="1">Belongs to the purine/pyrimidine phosphoribosyltransferase family. PyrE subfamily.</text>
</comment>
<feature type="chain" id="PRO_1000066230" description="Orotate phosphoribosyltransferase">
    <location>
        <begin position="1"/>
        <end position="213"/>
    </location>
</feature>
<feature type="binding site" description="in other chain" evidence="1">
    <location>
        <position position="26"/>
    </location>
    <ligand>
        <name>5-phospho-alpha-D-ribose 1-diphosphate</name>
        <dbReference type="ChEBI" id="CHEBI:58017"/>
        <note>ligand shared between dimeric partners</note>
    </ligand>
</feature>
<feature type="binding site" evidence="1">
    <location>
        <begin position="34"/>
        <end position="35"/>
    </location>
    <ligand>
        <name>orotate</name>
        <dbReference type="ChEBI" id="CHEBI:30839"/>
    </ligand>
</feature>
<feature type="binding site" description="in other chain" evidence="1">
    <location>
        <begin position="72"/>
        <end position="73"/>
    </location>
    <ligand>
        <name>5-phospho-alpha-D-ribose 1-diphosphate</name>
        <dbReference type="ChEBI" id="CHEBI:58017"/>
        <note>ligand shared between dimeric partners</note>
    </ligand>
</feature>
<feature type="binding site" evidence="1">
    <location>
        <position position="99"/>
    </location>
    <ligand>
        <name>5-phospho-alpha-D-ribose 1-diphosphate</name>
        <dbReference type="ChEBI" id="CHEBI:58017"/>
        <note>ligand shared between dimeric partners</note>
    </ligand>
</feature>
<feature type="binding site" description="in other chain" evidence="1">
    <location>
        <position position="100"/>
    </location>
    <ligand>
        <name>5-phospho-alpha-D-ribose 1-diphosphate</name>
        <dbReference type="ChEBI" id="CHEBI:58017"/>
        <note>ligand shared between dimeric partners</note>
    </ligand>
</feature>
<feature type="binding site" evidence="1">
    <location>
        <position position="103"/>
    </location>
    <ligand>
        <name>5-phospho-alpha-D-ribose 1-diphosphate</name>
        <dbReference type="ChEBI" id="CHEBI:58017"/>
        <note>ligand shared between dimeric partners</note>
    </ligand>
</feature>
<feature type="binding site" evidence="1">
    <location>
        <position position="105"/>
    </location>
    <ligand>
        <name>5-phospho-alpha-D-ribose 1-diphosphate</name>
        <dbReference type="ChEBI" id="CHEBI:58017"/>
        <note>ligand shared between dimeric partners</note>
    </ligand>
</feature>
<feature type="binding site" description="in other chain" evidence="1">
    <location>
        <begin position="124"/>
        <end position="132"/>
    </location>
    <ligand>
        <name>5-phospho-alpha-D-ribose 1-diphosphate</name>
        <dbReference type="ChEBI" id="CHEBI:58017"/>
        <note>ligand shared between dimeric partners</note>
    </ligand>
</feature>
<feature type="binding site" evidence="1">
    <location>
        <position position="128"/>
    </location>
    <ligand>
        <name>orotate</name>
        <dbReference type="ChEBI" id="CHEBI:30839"/>
    </ligand>
</feature>
<feature type="binding site" evidence="1">
    <location>
        <position position="156"/>
    </location>
    <ligand>
        <name>orotate</name>
        <dbReference type="ChEBI" id="CHEBI:30839"/>
    </ligand>
</feature>
<sequence length="213" mass="23612">MKPYQRQFIEFALNKQVLKFGEFTLKSGRKSPYFFNAGLFNTGRDLALLGRFYAEALVDSGIDFDLLFGPAYKGIPIATTTAVALAEHHDRDVPYCFNRKEAKTHGEGGNLVGSELQGRIMLVDDVITAGTAIRESMEIIQANGASLAGVLISLDRQERGRGEISAIQEVERDYGCNVISIITLKDLIAYLEEKPEMADHLASVRAYREEFGV</sequence>
<accession>A4W507</accession>
<reference key="1">
    <citation type="journal article" date="2010" name="PLoS Genet.">
        <title>Genome sequence of the plant growth promoting endophytic bacterium Enterobacter sp. 638.</title>
        <authorList>
            <person name="Taghavi S."/>
            <person name="van der Lelie D."/>
            <person name="Hoffman A."/>
            <person name="Zhang Y.B."/>
            <person name="Walla M.D."/>
            <person name="Vangronsveld J."/>
            <person name="Newman L."/>
            <person name="Monchy S."/>
        </authorList>
    </citation>
    <scope>NUCLEOTIDE SEQUENCE [LARGE SCALE GENOMIC DNA]</scope>
    <source>
        <strain>638</strain>
    </source>
</reference>
<gene>
    <name evidence="1" type="primary">pyrE</name>
    <name type="ordered locus">Ent638_0097</name>
</gene>
<protein>
    <recommendedName>
        <fullName evidence="1">Orotate phosphoribosyltransferase</fullName>
        <shortName evidence="1">OPRT</shortName>
        <shortName evidence="1">OPRTase</shortName>
        <ecNumber evidence="1">2.4.2.10</ecNumber>
    </recommendedName>
</protein>
<name>PYRE_ENT38</name>
<keyword id="KW-0328">Glycosyltransferase</keyword>
<keyword id="KW-0460">Magnesium</keyword>
<keyword id="KW-0665">Pyrimidine biosynthesis</keyword>
<keyword id="KW-0808">Transferase</keyword>
<dbReference type="EC" id="2.4.2.10" evidence="1"/>
<dbReference type="EMBL" id="CP000653">
    <property type="protein sequence ID" value="ABP58787.1"/>
    <property type="molecule type" value="Genomic_DNA"/>
</dbReference>
<dbReference type="RefSeq" id="WP_011915365.1">
    <property type="nucleotide sequence ID" value="NC_009436.1"/>
</dbReference>
<dbReference type="SMR" id="A4W507"/>
<dbReference type="STRING" id="399742.Ent638_0097"/>
<dbReference type="KEGG" id="ent:Ent638_0097"/>
<dbReference type="eggNOG" id="COG0461">
    <property type="taxonomic scope" value="Bacteria"/>
</dbReference>
<dbReference type="HOGENOM" id="CLU_074878_0_1_6"/>
<dbReference type="OrthoDB" id="9779060at2"/>
<dbReference type="UniPathway" id="UPA00070">
    <property type="reaction ID" value="UER00119"/>
</dbReference>
<dbReference type="Proteomes" id="UP000000230">
    <property type="component" value="Chromosome"/>
</dbReference>
<dbReference type="GO" id="GO:0005737">
    <property type="term" value="C:cytoplasm"/>
    <property type="evidence" value="ECO:0007669"/>
    <property type="project" value="TreeGrafter"/>
</dbReference>
<dbReference type="GO" id="GO:0000287">
    <property type="term" value="F:magnesium ion binding"/>
    <property type="evidence" value="ECO:0007669"/>
    <property type="project" value="UniProtKB-UniRule"/>
</dbReference>
<dbReference type="GO" id="GO:0004588">
    <property type="term" value="F:orotate phosphoribosyltransferase activity"/>
    <property type="evidence" value="ECO:0007669"/>
    <property type="project" value="UniProtKB-UniRule"/>
</dbReference>
<dbReference type="GO" id="GO:0006207">
    <property type="term" value="P:'de novo' pyrimidine nucleobase biosynthetic process"/>
    <property type="evidence" value="ECO:0007669"/>
    <property type="project" value="TreeGrafter"/>
</dbReference>
<dbReference type="GO" id="GO:0044205">
    <property type="term" value="P:'de novo' UMP biosynthetic process"/>
    <property type="evidence" value="ECO:0007669"/>
    <property type="project" value="UniProtKB-UniRule"/>
</dbReference>
<dbReference type="GO" id="GO:0046132">
    <property type="term" value="P:pyrimidine ribonucleoside biosynthetic process"/>
    <property type="evidence" value="ECO:0007669"/>
    <property type="project" value="TreeGrafter"/>
</dbReference>
<dbReference type="CDD" id="cd06223">
    <property type="entry name" value="PRTases_typeI"/>
    <property type="match status" value="1"/>
</dbReference>
<dbReference type="FunFam" id="3.40.50.2020:FF:000008">
    <property type="entry name" value="Orotate phosphoribosyltransferase"/>
    <property type="match status" value="1"/>
</dbReference>
<dbReference type="Gene3D" id="3.40.50.2020">
    <property type="match status" value="1"/>
</dbReference>
<dbReference type="HAMAP" id="MF_01208">
    <property type="entry name" value="PyrE"/>
    <property type="match status" value="1"/>
</dbReference>
<dbReference type="InterPro" id="IPR023031">
    <property type="entry name" value="OPRT"/>
</dbReference>
<dbReference type="InterPro" id="IPR004467">
    <property type="entry name" value="Or_phspho_trans_dom"/>
</dbReference>
<dbReference type="InterPro" id="IPR000836">
    <property type="entry name" value="PRibTrfase_dom"/>
</dbReference>
<dbReference type="InterPro" id="IPR029057">
    <property type="entry name" value="PRTase-like"/>
</dbReference>
<dbReference type="NCBIfam" id="TIGR00336">
    <property type="entry name" value="pyrE"/>
    <property type="match status" value="1"/>
</dbReference>
<dbReference type="PANTHER" id="PTHR46683">
    <property type="entry name" value="OROTATE PHOSPHORIBOSYLTRANSFERASE 1-RELATED"/>
    <property type="match status" value="1"/>
</dbReference>
<dbReference type="PANTHER" id="PTHR46683:SF1">
    <property type="entry name" value="OROTATE PHOSPHORIBOSYLTRANSFERASE 1-RELATED"/>
    <property type="match status" value="1"/>
</dbReference>
<dbReference type="Pfam" id="PF00156">
    <property type="entry name" value="Pribosyltran"/>
    <property type="match status" value="1"/>
</dbReference>
<dbReference type="SUPFAM" id="SSF53271">
    <property type="entry name" value="PRTase-like"/>
    <property type="match status" value="1"/>
</dbReference>
<dbReference type="PROSITE" id="PS00103">
    <property type="entry name" value="PUR_PYR_PR_TRANSFER"/>
    <property type="match status" value="1"/>
</dbReference>